<gene>
    <name type="primary">CASR</name>
    <name type="synonym">GPRC2A</name>
    <name evidence="7" type="synonym">PCAR1</name>
</gene>
<dbReference type="EMBL" id="S67307">
    <property type="protein sequence ID" value="AAB29171.1"/>
    <property type="molecule type" value="mRNA"/>
</dbReference>
<dbReference type="PIR" id="S40476">
    <property type="entry name" value="S40476"/>
</dbReference>
<dbReference type="RefSeq" id="NP_776427.1">
    <property type="nucleotide sequence ID" value="NM_174002.3"/>
</dbReference>
<dbReference type="RefSeq" id="XP_005201442.2">
    <property type="nucleotide sequence ID" value="XM_005201385.5"/>
</dbReference>
<dbReference type="RefSeq" id="XP_010799466.2">
    <property type="nucleotide sequence ID" value="XM_010801164.4"/>
</dbReference>
<dbReference type="SMR" id="P35384"/>
<dbReference type="BioGRID" id="158410">
    <property type="interactions" value="1"/>
</dbReference>
<dbReference type="FunCoup" id="P35384">
    <property type="interactions" value="252"/>
</dbReference>
<dbReference type="STRING" id="9913.ENSBTAP00000059078"/>
<dbReference type="BindingDB" id="P35384"/>
<dbReference type="ChEMBL" id="CHEMBL1075316"/>
<dbReference type="DrugCentral" id="P35384"/>
<dbReference type="GlyCosmos" id="P35384">
    <property type="glycosylation" value="10 sites, No reported glycans"/>
</dbReference>
<dbReference type="GlyGen" id="P35384">
    <property type="glycosylation" value="10 sites"/>
</dbReference>
<dbReference type="PaxDb" id="9913-ENSBTAP00000005042"/>
<dbReference type="Ensembl" id="ENSBTAT00000005042.6">
    <property type="protein sequence ID" value="ENSBTAP00000005042.6"/>
    <property type="gene ID" value="ENSBTAG00000003865.7"/>
</dbReference>
<dbReference type="GeneID" id="281038"/>
<dbReference type="KEGG" id="bta:281038"/>
<dbReference type="CTD" id="846"/>
<dbReference type="VEuPathDB" id="HostDB:ENSBTAG00000003865"/>
<dbReference type="VGNC" id="VGNC:26788">
    <property type="gene designation" value="CASR"/>
</dbReference>
<dbReference type="eggNOG" id="KOG1056">
    <property type="taxonomic scope" value="Eukaryota"/>
</dbReference>
<dbReference type="GeneTree" id="ENSGT00940000157596"/>
<dbReference type="InParanoid" id="P35384"/>
<dbReference type="OMA" id="KCPDDSW"/>
<dbReference type="OrthoDB" id="5984008at2759"/>
<dbReference type="Reactome" id="R-BTA-416476">
    <property type="pathway name" value="G alpha (q) signalling events"/>
</dbReference>
<dbReference type="Reactome" id="R-BTA-418594">
    <property type="pathway name" value="G alpha (i) signalling events"/>
</dbReference>
<dbReference type="Reactome" id="R-BTA-420499">
    <property type="pathway name" value="Class C/3 (Metabotropic glutamate/pheromone receptors)"/>
</dbReference>
<dbReference type="PRO" id="PR:P35384"/>
<dbReference type="Proteomes" id="UP000009136">
    <property type="component" value="Chromosome 1"/>
</dbReference>
<dbReference type="Bgee" id="ENSBTAG00000003865">
    <property type="expression patterns" value="Expressed in adenohypophysis and 20 other cell types or tissues"/>
</dbReference>
<dbReference type="GO" id="GO:0043679">
    <property type="term" value="C:axon terminus"/>
    <property type="evidence" value="ECO:0000250"/>
    <property type="project" value="AgBase"/>
</dbReference>
<dbReference type="GO" id="GO:0098978">
    <property type="term" value="C:glutamatergic synapse"/>
    <property type="evidence" value="ECO:0007669"/>
    <property type="project" value="Ensembl"/>
</dbReference>
<dbReference type="GO" id="GO:0005886">
    <property type="term" value="C:plasma membrane"/>
    <property type="evidence" value="ECO:0000250"/>
    <property type="project" value="UniProtKB"/>
</dbReference>
<dbReference type="GO" id="GO:0016597">
    <property type="term" value="F:amino acid binding"/>
    <property type="evidence" value="ECO:0000250"/>
    <property type="project" value="UniProtKB"/>
</dbReference>
<dbReference type="GO" id="GO:0005509">
    <property type="term" value="F:calcium ion binding"/>
    <property type="evidence" value="ECO:0000250"/>
    <property type="project" value="UniProtKB"/>
</dbReference>
<dbReference type="GO" id="GO:0004930">
    <property type="term" value="F:G protein-coupled receptor activity"/>
    <property type="evidence" value="ECO:0000250"/>
    <property type="project" value="UniProtKB"/>
</dbReference>
<dbReference type="GO" id="GO:0042803">
    <property type="term" value="F:protein homodimerization activity"/>
    <property type="evidence" value="ECO:0000250"/>
    <property type="project" value="UniProtKB"/>
</dbReference>
<dbReference type="GO" id="GO:0070509">
    <property type="term" value="P:calcium ion import"/>
    <property type="evidence" value="ECO:0007669"/>
    <property type="project" value="Ensembl"/>
</dbReference>
<dbReference type="GO" id="GO:0006816">
    <property type="term" value="P:calcium ion transport"/>
    <property type="evidence" value="ECO:0000250"/>
    <property type="project" value="AgBase"/>
</dbReference>
<dbReference type="GO" id="GO:0005513">
    <property type="term" value="P:detection of calcium ion"/>
    <property type="evidence" value="ECO:0000250"/>
    <property type="project" value="UniProtKB"/>
</dbReference>
<dbReference type="GO" id="GO:0007186">
    <property type="term" value="P:G protein-coupled receptor signaling pathway"/>
    <property type="evidence" value="ECO:0000250"/>
    <property type="project" value="UniProtKB"/>
</dbReference>
<dbReference type="GO" id="GO:0006874">
    <property type="term" value="P:intracellular calcium ion homeostasis"/>
    <property type="evidence" value="ECO:0000250"/>
    <property type="project" value="UniProtKB"/>
</dbReference>
<dbReference type="GO" id="GO:0007254">
    <property type="term" value="P:JNK cascade"/>
    <property type="evidence" value="ECO:0000250"/>
    <property type="project" value="AgBase"/>
</dbReference>
<dbReference type="GO" id="GO:0001503">
    <property type="term" value="P:ossification"/>
    <property type="evidence" value="ECO:0000250"/>
    <property type="project" value="AgBase"/>
</dbReference>
<dbReference type="GO" id="GO:0008284">
    <property type="term" value="P:positive regulation of cell population proliferation"/>
    <property type="evidence" value="ECO:0000250"/>
    <property type="project" value="AgBase"/>
</dbReference>
<dbReference type="GO" id="GO:0010628">
    <property type="term" value="P:positive regulation of gene expression"/>
    <property type="evidence" value="ECO:0007669"/>
    <property type="project" value="Ensembl"/>
</dbReference>
<dbReference type="GO" id="GO:0051924">
    <property type="term" value="P:regulation of calcium ion transport"/>
    <property type="evidence" value="ECO:0000318"/>
    <property type="project" value="GO_Central"/>
</dbReference>
<dbReference type="GO" id="GO:0099505">
    <property type="term" value="P:regulation of presynaptic membrane potential"/>
    <property type="evidence" value="ECO:0007669"/>
    <property type="project" value="Ensembl"/>
</dbReference>
<dbReference type="GO" id="GO:0042311">
    <property type="term" value="P:vasodilation"/>
    <property type="evidence" value="ECO:0000250"/>
    <property type="project" value="AgBase"/>
</dbReference>
<dbReference type="CDD" id="cd15282">
    <property type="entry name" value="7tmC_CaSR"/>
    <property type="match status" value="1"/>
</dbReference>
<dbReference type="CDD" id="cd06364">
    <property type="entry name" value="PBP1_CaSR"/>
    <property type="match status" value="1"/>
</dbReference>
<dbReference type="FunFam" id="3.40.50.2300:FF:000016">
    <property type="entry name" value="Taste 1 receptor member 2"/>
    <property type="match status" value="1"/>
</dbReference>
<dbReference type="FunFam" id="2.10.50.30:FF:000002">
    <property type="entry name" value="Vomeronasal 2 receptor, h1"/>
    <property type="match status" value="1"/>
</dbReference>
<dbReference type="FunFam" id="3.40.50.2300:FF:000388">
    <property type="entry name" value="Vomeronasal 2, receptor 23"/>
    <property type="match status" value="1"/>
</dbReference>
<dbReference type="Gene3D" id="3.40.50.2300">
    <property type="match status" value="2"/>
</dbReference>
<dbReference type="Gene3D" id="2.10.50.30">
    <property type="entry name" value="GPCR, family 3, nine cysteines domain"/>
    <property type="match status" value="1"/>
</dbReference>
<dbReference type="InterPro" id="IPR001828">
    <property type="entry name" value="ANF_lig-bd_rcpt"/>
</dbReference>
<dbReference type="InterPro" id="IPR000337">
    <property type="entry name" value="GPCR_3"/>
</dbReference>
<dbReference type="InterPro" id="IPR011500">
    <property type="entry name" value="GPCR_3_9-Cys_dom"/>
</dbReference>
<dbReference type="InterPro" id="IPR038550">
    <property type="entry name" value="GPCR_3_9-Cys_sf"/>
</dbReference>
<dbReference type="InterPro" id="IPR017978">
    <property type="entry name" value="GPCR_3_C"/>
</dbReference>
<dbReference type="InterPro" id="IPR000068">
    <property type="entry name" value="GPCR_3_Ca_sens_rcpt-rel"/>
</dbReference>
<dbReference type="InterPro" id="IPR017979">
    <property type="entry name" value="GPCR_3_CS"/>
</dbReference>
<dbReference type="InterPro" id="IPR028082">
    <property type="entry name" value="Peripla_BP_I"/>
</dbReference>
<dbReference type="PANTHER" id="PTHR24061">
    <property type="entry name" value="CALCIUM-SENSING RECEPTOR-RELATED"/>
    <property type="match status" value="1"/>
</dbReference>
<dbReference type="PANTHER" id="PTHR24061:SF358">
    <property type="entry name" value="EXTRACELLULAR CALCIUM-SENSING RECEPTOR"/>
    <property type="match status" value="1"/>
</dbReference>
<dbReference type="Pfam" id="PF00003">
    <property type="entry name" value="7tm_3"/>
    <property type="match status" value="1"/>
</dbReference>
<dbReference type="Pfam" id="PF01094">
    <property type="entry name" value="ANF_receptor"/>
    <property type="match status" value="1"/>
</dbReference>
<dbReference type="Pfam" id="PF07562">
    <property type="entry name" value="NCD3G"/>
    <property type="match status" value="1"/>
</dbReference>
<dbReference type="PRINTS" id="PR00592">
    <property type="entry name" value="CASENSINGR"/>
</dbReference>
<dbReference type="PRINTS" id="PR00248">
    <property type="entry name" value="GPCRMGR"/>
</dbReference>
<dbReference type="SUPFAM" id="SSF53822">
    <property type="entry name" value="Periplasmic binding protein-like I"/>
    <property type="match status" value="1"/>
</dbReference>
<dbReference type="PROSITE" id="PS00979">
    <property type="entry name" value="G_PROTEIN_RECEP_F3_1"/>
    <property type="match status" value="1"/>
</dbReference>
<dbReference type="PROSITE" id="PS00980">
    <property type="entry name" value="G_PROTEIN_RECEP_F3_2"/>
    <property type="match status" value="1"/>
</dbReference>
<dbReference type="PROSITE" id="PS00981">
    <property type="entry name" value="G_PROTEIN_RECEP_F3_3"/>
    <property type="match status" value="1"/>
</dbReference>
<dbReference type="PROSITE" id="PS50259">
    <property type="entry name" value="G_PROTEIN_RECEP_F3_4"/>
    <property type="match status" value="1"/>
</dbReference>
<accession>P35384</accession>
<sequence>MALYSCCWILLAFSTWCTSAYGPDQRAQKKGDIILGGLFPIHFGVAVKDQDLKSRPESVECIRYNFRGFRWLQAMIFAIEEINSSPALLPNMTLGYRIFDTCNTVSKALEATLSFVAQNKIDSLNLDEFCNCSEHIPSTIAVVGATGSGISTAVANLLGLFYIPQVSYASSSRLLSNKNQFKSFLRTIPNDEHQATAMADIIEYFRWNWVGTIAADDDYGRPGIEKFREEAEERDICIDFSELISQYSDEEKIQQVVEVIQNSTAKVIVVFSSGPDLEPLIKEIVRRNITGRIWLASEAWASSSLIAMPEYFHVVGGTIGFGLKAGQIPGFREFLQKVHPRKSVHNGFAKEFWEETFNCHLQEGAKGPLPVDTFLRGHEEGGARLSNSPTAFRPLCTGEENISSVETPYMDYTHLRISYNVYLAVYSIAHALQDIYTCIPGRGLFTNGSCADIKKVEAWQVLKHLRHLNFTSNMGEQVTFDECGDLAGNYSIINWHLSPEDGSIVFKEVGYYNVYAKKGERLFINDEKILWSGFSREVPFSNCSRDCLAGTRKGIIEGEPTCCFECVECPDGEYSDETDASACDKCPDDFWSNENHTSCIAKEIEFLSWTEPFGIALTLFAVLGIFLTAFVLGVFIKFRNTPIVKATNRELSYLLLFSLLCCFSSSLFFIGEPQDWTCRLRQPAFGISFVLCISCILVKTNRVLLVFEAKIPTSFHRKWWGLNLQFLLVFLCTFMQIVICAIWLNTAPPSSYRNHELEDEIIFITCHEGSLMALGFLIGYTCLLAAICFFFAFKSRKLPENFNEAKFITFSMLIFFIVWISFIPAYASTYGKFVSAVEVIAILAASFGLLACIFFNKVYIILFKPSRNTIEEVRCSTAAHAFKVAARATLRRSNVSRQRSSSLGGSTGSTPSSSISSKSNSEDPFPQQQPKRQKQPQPLALSPHNAQQPQPRPPSTPQPQPQSQQPPRCKQKVIFGSGTVTFSLSFDEPQKTAVAHRNSTHQTSLEAQKNNDALTKHQALLPLQCGETDSELTSQETGLQGPVGEDHQLEMEDPEEMSPALVVSNSRSFVISGGGSTVTENMLRS</sequence>
<evidence type="ECO:0000250" key="1">
    <source>
        <dbReference type="UniProtKB" id="P41180"/>
    </source>
</evidence>
<evidence type="ECO:0000250" key="2">
    <source>
        <dbReference type="UniProtKB" id="P48442"/>
    </source>
</evidence>
<evidence type="ECO:0000250" key="3">
    <source>
        <dbReference type="UniProtKB" id="Q9QY96"/>
    </source>
</evidence>
<evidence type="ECO:0000255" key="4"/>
<evidence type="ECO:0000256" key="5">
    <source>
        <dbReference type="SAM" id="MobiDB-lite"/>
    </source>
</evidence>
<evidence type="ECO:0000269" key="6">
    <source>
    </source>
</evidence>
<evidence type="ECO:0000303" key="7">
    <source>
    </source>
</evidence>
<evidence type="ECO:0000305" key="8"/>
<comment type="function">
    <text evidence="1 2 3 6">G-protein-coupled receptor that senses changes in the extracellular concentration of calcium ions and plays a key role in maintaining calcium homeostasis (PubMed:8255296). Senses fluctuations in the circulating calcium concentration: activated by elevated circulating calcium, leading to decreased parathyroid hormone (PTH) secretion in parathyroid glands (By similarity). In kidneys, acts as a key regulator of renal tubular calcium resorption (By similarity). Ligand binding causes a conformation change that triggers signaling via guanine nucleotide-binding proteins (G-proteins) and modulates the activity of downstream effectors. CASR is coupled with different G(q)/G(11), G(i)/G(o)- or G(s)-classes of G-proteins depending on the context. In the parathyroid and kidney, CASR signals through G(q)/G(11) and G(i)/G(o) G-proteins: G(q)/G(11) coupling activates phospholipase C-beta, releasing diacylglycerol (DAG) and inositol 1,4,5-trisphosphate (IP3) second messengers, while G(i)/G(o) coupling mediates inhibition of adenylate cyclase activity. The G-protein-coupled receptor activity is activated by a co-agonist mechanism: aromatic amino acids, such as Trp or Phe, act concertedly with divalent cations, such as calcium or magnesium, to achieve full receptor activation. Acts as an activator of the NLRP3 inflammasome via G(i)/G(o)-mediated signaling: down-regulation of cyclic AMP (cAMP) relieving NLRP3 inhibition by cAMP (By similarity). Acts as a regulator of proton-sensing receptor GPR68 in a seesaw manner: CASR-mediated signaling inhibits GPR68 signaling in response to extracellular calcium, while GPR68 inhibits CASR in presence of extracellular protons (By similarity).</text>
</comment>
<comment type="activity regulation">
    <text evidence="1">In resting state, adopts an open conformation, anion-binding promoting the inactive configuration. Upon aromatic amino acid-binding, the groove in the extracellular venus flytrap module is closed, thereby inducing the formation of a novel homodimer interface between subunits. Calcium ions stabilize the active state by enhancing homodimer interactions between membrane-proximal domains to fully activate the receptor. Upon activation, the homodimer adopts an asymmetric configuration of the 7-transmembrane region that primes one protomer for G-protein coupling. G-protein binding expands the transmembrane dimer interface; the restriction imposed by the receptor dimer, in combination with intracellular loop 2 (ICL2), enables G-protein activation by facilitating conformational transition of G-protein alpha. Coupling to different classes of G-proteins results in distinct CASR-G-protein interfaces.</text>
</comment>
<comment type="subunit">
    <text evidence="1 2">Homodimer; disulfide-linked. Interacts with VCP (By similarity). Interacts with ARRB1 (By similarity).</text>
</comment>
<comment type="subcellular location">
    <subcellularLocation>
        <location evidence="1">Cell membrane</location>
        <topology evidence="4">Multi-pass membrane protein</topology>
    </subcellularLocation>
</comment>
<comment type="domain">
    <text evidence="1">The extracellular regions of the homodimer interact in a side-by-side fashion while facing opposite directions. Each extracellular region consists of three domains, LB1 (ligand-binding 1), LB2 and CR (cysteine-rich). The two lobe-shaped domains LB1 and LB2 form a venus flytrap module. In the inactive configuration, the venus flytrap modules of both protomers are in the open conformation associated with the resting state (open-open) and the interdomain cleft is empty. In addition, each protomer contains three anions, which reinforce the inactive conformation, and one calcium ion. In the active configuration, both protomers of extracellular regions have the closed conformation associated with agonist-binding (closed-closed). The ligand-binding cleft of each protomer is solely occupied by an aromatic amino-acid. Calcium is bound at four novel sites, including one at the homodimer interface. Agonist-binding induces large conformational changes within the extracellular region homodimer: first, the venus flytrap module of each protomer undergoes domain closure. Second, the LB2 regions of the two protomers approach each other, resulting in an expansion of the homodimer interactions involving LB2 domains. Third, the CR regions of the two subunits interact to form a large homodimer interface that is unique to the active state. The CR regions are brought into close contact by the motion involving LB2 since the two domains are rigidly associated within each subunit.</text>
</comment>
<comment type="domain">
    <text evidence="1">G-protein recognition is mediated by the intracellular loop 2 (ICL2) and the C-terminus, which contribute differentially towards the binding of the 2 G-protein subtypes G(q)/G(11) and G(i)/G(o), resulting in distinct CASR-G-protein interfaces. The C-terminus confers selectivity for G(q)/G(11), while it contributes less to G(i)/G(o)-coupling. The C-terminus adopts opposing orientations for G(q)/G(11) and G(i)/G(o)-coupling.</text>
</comment>
<comment type="domain">
    <text evidence="1">The arginine-rich retention motif inhibits localization to the plasma membrane, possibly by promoting interaction with 14-3-3 proteins. Phosphorylation at Ser-893 by PKC and Ser-900 by PKA relieve inhibition and promote plasma membrane localization.</text>
</comment>
<comment type="PTM">
    <text evidence="1">Phosphorylation at Thr-889 by PKC impairs coupling with G(q)/G(11) G-proteins, while it does not affect G(i)/G(o)-coupling. Phosphorylation at Ser-893 by PKC and Ser-900 by PKA promote plasma membrane localization.</text>
</comment>
<comment type="PTM">
    <text evidence="1">Ubiquitinated by RNF19A; which induces proteasomal degradation.</text>
</comment>
<comment type="similarity">
    <text evidence="8">Belongs to the G-protein coupled receptor 3 family.</text>
</comment>
<protein>
    <recommendedName>
        <fullName>Extracellular calcium-sensing receptor</fullName>
        <shortName>CaSR</shortName>
    </recommendedName>
    <alternativeName>
        <fullName evidence="7">Parathyroid cell calcium-sensing receptor</fullName>
        <shortName evidence="7">BoPCaR1</shortName>
        <shortName evidence="7">PCaR1</shortName>
    </alternativeName>
</protein>
<reference key="1">
    <citation type="journal article" date="1993" name="Nature">
        <title>Cloning and characterization of an extracellular Ca(2+)-sensing receptor from bovine parathyroid.</title>
        <authorList>
            <person name="Brown E.M."/>
            <person name="Gamba G."/>
            <person name="Riccardi D."/>
            <person name="Lombardi M."/>
            <person name="Butters R."/>
            <person name="Kifor O."/>
            <person name="Sun A."/>
            <person name="Hediger M.A."/>
            <person name="Lytton J."/>
            <person name="Hebert S.C."/>
        </authorList>
    </citation>
    <scope>NUCLEOTIDE SEQUENCE [MRNA]</scope>
    <scope>FUNCTION</scope>
    <source>
        <tissue>Parathyroid</tissue>
    </source>
</reference>
<name>CASR_BOVIN</name>
<feature type="signal peptide" evidence="4">
    <location>
        <begin position="1"/>
        <end position="19"/>
    </location>
</feature>
<feature type="chain" id="PRO_0000012945" description="Extracellular calcium-sensing receptor">
    <location>
        <begin position="20"/>
        <end position="1085"/>
    </location>
</feature>
<feature type="topological domain" description="Extracellular" evidence="1">
    <location>
        <begin position="20"/>
        <end position="611"/>
    </location>
</feature>
<feature type="transmembrane region" description="Helical; Name=1" evidence="1">
    <location>
        <begin position="612"/>
        <end position="637"/>
    </location>
</feature>
<feature type="topological domain" description="Cytoplasmic" evidence="1">
    <location>
        <begin position="638"/>
        <end position="649"/>
    </location>
</feature>
<feature type="transmembrane region" description="Helical; Name=2" evidence="1">
    <location>
        <begin position="650"/>
        <end position="669"/>
    </location>
</feature>
<feature type="topological domain" description="Extracellular" evidence="1">
    <location>
        <begin position="670"/>
        <end position="675"/>
    </location>
</feature>
<feature type="transmembrane region" description="Helical; Name=3" evidence="1">
    <location>
        <begin position="676"/>
        <end position="699"/>
    </location>
</feature>
<feature type="topological domain" description="Cytoplasmic" evidence="1">
    <location>
        <begin position="700"/>
        <end position="723"/>
    </location>
</feature>
<feature type="transmembrane region" description="Helical; Name=4" evidence="1">
    <location>
        <begin position="724"/>
        <end position="746"/>
    </location>
</feature>
<feature type="topological domain" description="Extracellular" evidence="1 8">
    <location>
        <begin position="747"/>
        <end position="770"/>
    </location>
</feature>
<feature type="transmembrane region" description="Helical; Name=5" evidence="1">
    <location>
        <begin position="771"/>
        <end position="790"/>
    </location>
</feature>
<feature type="topological domain" description="Cytoplasmic" evidence="1">
    <location>
        <begin position="791"/>
        <end position="806"/>
    </location>
</feature>
<feature type="transmembrane region" description="Helical; Name=6" evidence="1">
    <location>
        <begin position="807"/>
        <end position="829"/>
    </location>
</feature>
<feature type="topological domain" description="Extracellular" evidence="1">
    <location>
        <begin position="830"/>
        <end position="833"/>
    </location>
</feature>
<feature type="transmembrane region" description="Helical; Name=7" evidence="1">
    <location>
        <begin position="834"/>
        <end position="855"/>
    </location>
</feature>
<feature type="topological domain" description="Cytoplasmic" evidence="1">
    <location>
        <begin position="856"/>
        <end position="1085"/>
    </location>
</feature>
<feature type="region of interest" description="Ligand-binding 1 (LB1)" evidence="1">
    <location>
        <begin position="23"/>
        <end position="189"/>
    </location>
</feature>
<feature type="region of interest" description="Ligand-binding 2 (LB2)" evidence="1">
    <location>
        <begin position="190"/>
        <end position="325"/>
    </location>
</feature>
<feature type="region of interest" description="Cysteine-rich (CR)" evidence="1">
    <location>
        <begin position="543"/>
        <end position="613"/>
    </location>
</feature>
<feature type="region of interest" description="Intracellular loop 1 (ICL1)" evidence="1">
    <location>
        <begin position="638"/>
        <end position="649"/>
    </location>
</feature>
<feature type="region of interest" description="Intracellular loop 2 (ICL2)" evidence="1">
    <location>
        <begin position="700"/>
        <end position="723"/>
    </location>
</feature>
<feature type="region of interest" description="Intracellular loop 3 (ICL3)" evidence="1">
    <location>
        <begin position="791"/>
        <end position="806"/>
    </location>
</feature>
<feature type="region of interest" description="C-terminus" evidence="1">
    <location>
        <begin position="856"/>
        <end position="1085"/>
    </location>
</feature>
<feature type="region of interest" description="Interaction with RNF19A" evidence="1">
    <location>
        <begin position="881"/>
        <end position="901"/>
    </location>
</feature>
<feature type="region of interest" description="Arginine-rich retention motif" evidence="1">
    <location>
        <begin position="891"/>
        <end position="899"/>
    </location>
</feature>
<feature type="region of interest" description="Disordered" evidence="5">
    <location>
        <begin position="893"/>
        <end position="969"/>
    </location>
</feature>
<feature type="region of interest" description="Disordered" evidence="5">
    <location>
        <begin position="1034"/>
        <end position="1058"/>
    </location>
</feature>
<feature type="compositionally biased region" description="Low complexity" evidence="5">
    <location>
        <begin position="893"/>
        <end position="938"/>
    </location>
</feature>
<feature type="compositionally biased region" description="Pro residues" evidence="5">
    <location>
        <begin position="950"/>
        <end position="960"/>
    </location>
</feature>
<feature type="binding site" evidence="1">
    <location>
        <begin position="67"/>
        <end position="71"/>
    </location>
    <ligand>
        <name>phosphate</name>
        <dbReference type="ChEBI" id="CHEBI:43474"/>
        <note>required for structural stability of the receptor</note>
    </ligand>
</feature>
<feature type="binding site" evidence="1">
    <location>
        <position position="82"/>
    </location>
    <ligand>
        <name>Ca(2+)</name>
        <dbReference type="ChEBI" id="CHEBI:29108"/>
    </ligand>
</feature>
<feature type="binding site" evidence="1">
    <location>
        <position position="85"/>
    </location>
    <ligand>
        <name>Ca(2+)</name>
        <dbReference type="ChEBI" id="CHEBI:29108"/>
    </ligand>
</feature>
<feature type="binding site" evidence="1">
    <location>
        <position position="88"/>
    </location>
    <ligand>
        <name>Ca(2+)</name>
        <dbReference type="ChEBI" id="CHEBI:29108"/>
    </ligand>
</feature>
<feature type="binding site" evidence="1">
    <location>
        <position position="89"/>
    </location>
    <ligand>
        <name>Ca(2+)</name>
        <dbReference type="ChEBI" id="CHEBI:29108"/>
    </ligand>
</feature>
<feature type="binding site" evidence="1">
    <location>
        <position position="101"/>
    </location>
    <ligand>
        <name>Ca(2+)</name>
        <dbReference type="ChEBI" id="CHEBI:29108"/>
    </ligand>
</feature>
<feature type="binding site" evidence="1">
    <location>
        <position position="146"/>
    </location>
    <ligand>
        <name>Ca(2+)</name>
        <dbReference type="ChEBI" id="CHEBI:29108"/>
    </ligand>
</feature>
<feature type="binding site" evidence="1">
    <location>
        <position position="148"/>
    </location>
    <ligand>
        <name>L-tryptophan</name>
        <dbReference type="ChEBI" id="CHEBI:57912"/>
    </ligand>
</feature>
<feature type="binding site" evidence="1">
    <location>
        <position position="169"/>
    </location>
    <ligand>
        <name>L-tryptophan</name>
        <dbReference type="ChEBI" id="CHEBI:57912"/>
    </ligand>
</feature>
<feature type="binding site" evidence="1">
    <location>
        <position position="171"/>
    </location>
    <ligand>
        <name>Ca(2+)</name>
        <dbReference type="ChEBI" id="CHEBI:29108"/>
    </ligand>
</feature>
<feature type="binding site" evidence="1">
    <location>
        <position position="171"/>
    </location>
    <ligand>
        <name>L-tryptophan</name>
        <dbReference type="ChEBI" id="CHEBI:57912"/>
    </ligand>
</feature>
<feature type="binding site" evidence="1">
    <location>
        <position position="189"/>
    </location>
    <ligand>
        <name>Ca(2+)</name>
        <dbReference type="ChEBI" id="CHEBI:29108"/>
    </ligand>
</feature>
<feature type="binding site" evidence="1">
    <location>
        <position position="191"/>
    </location>
    <ligand>
        <name>Ca(2+)</name>
        <dbReference type="ChEBI" id="CHEBI:29108"/>
    </ligand>
</feature>
<feature type="binding site" evidence="1">
    <location>
        <position position="232"/>
    </location>
    <ligand>
        <name>Ca(2+)</name>
        <dbReference type="ChEBI" id="CHEBI:29108"/>
    </ligand>
</feature>
<feature type="binding site" evidence="1">
    <location>
        <position position="235"/>
    </location>
    <ligand>
        <name>Ca(2+)</name>
        <dbReference type="ChEBI" id="CHEBI:29108"/>
    </ligand>
</feature>
<feature type="binding site" evidence="1">
    <location>
        <position position="239"/>
    </location>
    <ligand>
        <name>spermine</name>
        <dbReference type="ChEBI" id="CHEBI:45725"/>
    </ligand>
</feature>
<feature type="binding site" evidence="1">
    <location>
        <position position="241"/>
    </location>
    <ligand>
        <name>spermine</name>
        <dbReference type="ChEBI" id="CHEBI:45725"/>
    </ligand>
</feature>
<feature type="binding site" evidence="1">
    <location>
        <position position="298"/>
    </location>
    <ligand>
        <name>Ca(2+)</name>
        <dbReference type="ChEBI" id="CHEBI:29108"/>
    </ligand>
</feature>
<feature type="binding site" evidence="1">
    <location>
        <position position="298"/>
    </location>
    <ligand>
        <name>L-tryptophan</name>
        <dbReference type="ChEBI" id="CHEBI:57912"/>
    </ligand>
</feature>
<feature type="binding site" evidence="1">
    <location>
        <begin position="416"/>
        <end position="418"/>
    </location>
    <ligand>
        <name>phosphate</name>
        <dbReference type="ChEBI" id="CHEBI:43474"/>
        <note>required for structural stability of the receptor</note>
    </ligand>
</feature>
<feature type="binding site" evidence="1">
    <location>
        <position position="490"/>
    </location>
    <ligand>
        <name>Ca(2+)</name>
        <dbReference type="ChEBI" id="CHEBI:29108"/>
    </ligand>
</feature>
<feature type="binding site" evidence="1">
    <location>
        <position position="558"/>
    </location>
    <ligand>
        <name>Ca(2+)</name>
        <dbReference type="ChEBI" id="CHEBI:29108"/>
    </ligand>
</feature>
<feature type="modified residue" description="Phosphothreonine" evidence="1">
    <location>
        <position position="889"/>
    </location>
</feature>
<feature type="modified residue" description="Phosphoserine" evidence="1">
    <location>
        <position position="893"/>
    </location>
</feature>
<feature type="modified residue" description="Phosphoserine" evidence="1">
    <location>
        <position position="900"/>
    </location>
</feature>
<feature type="modified residue" description="Phosphoserine" evidence="3">
    <location>
        <position position="921"/>
    </location>
</feature>
<feature type="modified residue" description="Phosphoserine" evidence="3">
    <location>
        <position position="1068"/>
    </location>
</feature>
<feature type="glycosylation site" description="N-linked (GlcNAc...) asparagine" evidence="4">
    <location>
        <position position="91"/>
    </location>
</feature>
<feature type="glycosylation site" description="N-linked (GlcNAc...) asparagine" evidence="4">
    <location>
        <position position="131"/>
    </location>
</feature>
<feature type="glycosylation site" description="N-linked (GlcNAc...) asparagine" evidence="4">
    <location>
        <position position="262"/>
    </location>
</feature>
<feature type="glycosylation site" description="N-linked (GlcNAc...) asparagine" evidence="4">
    <location>
        <position position="288"/>
    </location>
</feature>
<feature type="glycosylation site" description="N-linked (GlcNAc...) asparagine" evidence="4">
    <location>
        <position position="401"/>
    </location>
</feature>
<feature type="glycosylation site" description="N-linked (GlcNAc...) asparagine" evidence="4">
    <location>
        <position position="447"/>
    </location>
</feature>
<feature type="glycosylation site" description="N-linked (GlcNAc...) asparagine" evidence="4">
    <location>
        <position position="469"/>
    </location>
</feature>
<feature type="glycosylation site" description="N-linked (GlcNAc...) asparagine" evidence="4">
    <location>
        <position position="489"/>
    </location>
</feature>
<feature type="glycosylation site" description="N-linked (GlcNAc...) asparagine" evidence="4">
    <location>
        <position position="542"/>
    </location>
</feature>
<feature type="glycosylation site" description="N-linked (GlcNAc...) asparagine" evidence="4">
    <location>
        <position position="595"/>
    </location>
</feature>
<feature type="disulfide bond" evidence="1">
    <location>
        <begin position="61"/>
        <end position="102"/>
    </location>
</feature>
<feature type="disulfide bond" description="Interchain" evidence="1">
    <location>
        <position position="130"/>
    </location>
</feature>
<feature type="disulfide bond" description="Interchain" evidence="1">
    <location>
        <position position="132"/>
    </location>
</feature>
<feature type="disulfide bond" evidence="1">
    <location>
        <begin position="237"/>
        <end position="562"/>
    </location>
</feature>
<feature type="disulfide bond" evidence="1">
    <location>
        <begin position="359"/>
        <end position="396"/>
    </location>
</feature>
<feature type="disulfide bond" evidence="1">
    <location>
        <begin position="438"/>
        <end position="450"/>
    </location>
</feature>
<feature type="disulfide bond" evidence="1">
    <location>
        <begin position="543"/>
        <end position="563"/>
    </location>
</feature>
<feature type="disulfide bond" evidence="1">
    <location>
        <begin position="547"/>
        <end position="566"/>
    </location>
</feature>
<feature type="disulfide bond" evidence="1">
    <location>
        <begin position="569"/>
        <end position="583"/>
    </location>
</feature>
<feature type="disulfide bond" evidence="1">
    <location>
        <begin position="586"/>
        <end position="599"/>
    </location>
</feature>
<keyword id="KW-0106">Calcium</keyword>
<keyword id="KW-1003">Cell membrane</keyword>
<keyword id="KW-1015">Disulfide bond</keyword>
<keyword id="KW-0297">G-protein coupled receptor</keyword>
<keyword id="KW-0325">Glycoprotein</keyword>
<keyword id="KW-0472">Membrane</keyword>
<keyword id="KW-0479">Metal-binding</keyword>
<keyword id="KW-0597">Phosphoprotein</keyword>
<keyword id="KW-0675">Receptor</keyword>
<keyword id="KW-1185">Reference proteome</keyword>
<keyword id="KW-0732">Signal</keyword>
<keyword id="KW-0807">Transducer</keyword>
<keyword id="KW-0812">Transmembrane</keyword>
<keyword id="KW-1133">Transmembrane helix</keyword>
<keyword id="KW-0832">Ubl conjugation</keyword>
<organism>
    <name type="scientific">Bos taurus</name>
    <name type="common">Bovine</name>
    <dbReference type="NCBI Taxonomy" id="9913"/>
    <lineage>
        <taxon>Eukaryota</taxon>
        <taxon>Metazoa</taxon>
        <taxon>Chordata</taxon>
        <taxon>Craniata</taxon>
        <taxon>Vertebrata</taxon>
        <taxon>Euteleostomi</taxon>
        <taxon>Mammalia</taxon>
        <taxon>Eutheria</taxon>
        <taxon>Laurasiatheria</taxon>
        <taxon>Artiodactyla</taxon>
        <taxon>Ruminantia</taxon>
        <taxon>Pecora</taxon>
        <taxon>Bovidae</taxon>
        <taxon>Bovinae</taxon>
        <taxon>Bos</taxon>
    </lineage>
</organism>
<proteinExistence type="evidence at transcript level"/>